<proteinExistence type="inferred from homology"/>
<reference key="1">
    <citation type="journal article" date="2002" name="Appl. Environ. Microbiol.">
        <title>Cloning and characterization of lin genes responsible for the degradation of hexachlorocyclohexane isomers by Sphingomonas paucimobilis strain B90.</title>
        <authorList>
            <person name="Kumari R."/>
            <person name="Subudhi S."/>
            <person name="Suar M."/>
            <person name="Dhingra G."/>
            <person name="Raina V."/>
            <person name="Dogra C."/>
            <person name="Lal S."/>
            <person name="van der Meer J.R."/>
            <person name="Holliger C."/>
            <person name="Lal R."/>
        </authorList>
    </citation>
    <scope>NUCLEOTIDE SEQUENCE [GENOMIC DNA]</scope>
    <scope>FUNCTION</scope>
    <scope>PATHWAY</scope>
    <source>
        <strain>B90</strain>
    </source>
</reference>
<reference key="2">
    <citation type="journal article" date="2012" name="J. Bacteriol.">
        <title>Genome sequence of Sphingobium indicum B90A, a hexachlorocyclohexane-degrading bacterium.</title>
        <authorList>
            <person name="Anand S."/>
            <person name="Sangwan N."/>
            <person name="Lata P."/>
            <person name="Kaur J."/>
            <person name="Dua A."/>
            <person name="Singh A.K."/>
            <person name="Verma M."/>
            <person name="Kaur J."/>
            <person name="Khurana J.P."/>
            <person name="Khurana P."/>
            <person name="Mathur S."/>
            <person name="Lal R."/>
        </authorList>
    </citation>
    <scope>NUCLEOTIDE SEQUENCE [LARGE SCALE GENOMIC DNA]</scope>
    <source>
        <strain>DSM 16412 / CCM 7286 / MTCC 6364 / B90A</strain>
        <plasmid>pSRL1</plasmid>
    </source>
</reference>
<protein>
    <recommendedName>
        <fullName evidence="2">2,5-dichloro-2,5-cyclohexadiene-1,4-diol dehydrogenase</fullName>
        <shortName evidence="2">2,5-DDOL dehydrogenase</shortName>
        <ecNumber evidence="2">1.1.1.-</ecNumber>
    </recommendedName>
</protein>
<organism>
    <name type="scientific">Sphingobium indicum (strain DSM 16412 / CCM 7286 / MTCC 6364 / B90A)</name>
    <dbReference type="NCBI Taxonomy" id="861109"/>
    <lineage>
        <taxon>Bacteria</taxon>
        <taxon>Pseudomonadati</taxon>
        <taxon>Pseudomonadota</taxon>
        <taxon>Alphaproteobacteria</taxon>
        <taxon>Sphingomonadales</taxon>
        <taxon>Sphingomonadaceae</taxon>
        <taxon>Sphingobium</taxon>
    </lineage>
</organism>
<geneLocation type="plasmid" evidence="8">
    <name>pSRL1</name>
</geneLocation>
<evidence type="ECO:0000250" key="1"/>
<evidence type="ECO:0000250" key="2">
    <source>
        <dbReference type="UniProtKB" id="D4YYG1"/>
    </source>
</evidence>
<evidence type="ECO:0000255" key="3">
    <source>
        <dbReference type="PROSITE-ProRule" id="PRU10001"/>
    </source>
</evidence>
<evidence type="ECO:0000303" key="4">
    <source>
    </source>
</evidence>
<evidence type="ECO:0000305" key="5"/>
<evidence type="ECO:0000305" key="6">
    <source>
    </source>
</evidence>
<evidence type="ECO:0000312" key="7">
    <source>
        <dbReference type="EMBL" id="APL96511.1"/>
    </source>
</evidence>
<evidence type="ECO:0000312" key="8">
    <source>
        <dbReference type="Proteomes" id="UP000004550"/>
    </source>
</evidence>
<name>LINC_SPHIB</name>
<feature type="chain" id="PRO_0000444941" description="2,5-dichloro-2,5-cyclohexadiene-1,4-diol dehydrogenase">
    <location>
        <begin position="1"/>
        <end position="250"/>
    </location>
</feature>
<feature type="active site" description="Proton acceptor" evidence="3">
    <location>
        <position position="154"/>
    </location>
</feature>
<feature type="binding site" evidence="1">
    <location>
        <begin position="9"/>
        <end position="34"/>
    </location>
    <ligand>
        <name>NAD(+)</name>
        <dbReference type="ChEBI" id="CHEBI:57540"/>
    </ligand>
</feature>
<feature type="binding site" evidence="1">
    <location>
        <position position="141"/>
    </location>
    <ligand>
        <name>substrate</name>
    </ligand>
</feature>
<feature type="sequence conflict" description="In Ref. 1; AAN64242." evidence="5" ref="1">
    <original>A</original>
    <variation>P</variation>
    <location>
        <position position="54"/>
    </location>
</feature>
<sequence>MSDLSGKTIIVTGGGSGIGRATVELLVASGANVAVADINDEAGEAVVAASGGKAAYFRCDIAQEEDVKALVAQTLAAFGGLDGAFNNAAIPQAGLPLAEVSLERFRQSMDINVTGTFLCMKYQILAMIERGTKGSIVNTASVAGVVGVPMHGEYVGAKHAVVGLTRVAAADYGKHGIRVNALVPGAVRTPMLQRAMDNDAGLEPYLNSIHPIGRFSEPHEQAQAAVWLLSDAASFVTGSCLAADGGFTAI</sequence>
<comment type="function">
    <text evidence="2 6">Catalyzes the dehydrogenation of 2,5-dichloro-2,5-cyclohexadiene-1,4-diol (2,5-DDOL) to 2,5-dichlorohydroquinone (2,5-DCHQ), a step in the degradation of gamma-hexachlorocyclohexane (gamma-HCH or lindane).</text>
</comment>
<comment type="catalytic activity">
    <reaction evidence="2">
        <text>2,5-dichlorocyclohexa-2,5-dien-1,4-diol + NAD(+) = 2,5-dichlorohydroquinone + NADH + H(+)</text>
        <dbReference type="Rhea" id="RHEA:15741"/>
        <dbReference type="ChEBI" id="CHEBI:15378"/>
        <dbReference type="ChEBI" id="CHEBI:27545"/>
        <dbReference type="ChEBI" id="CHEBI:28975"/>
        <dbReference type="ChEBI" id="CHEBI:57540"/>
        <dbReference type="ChEBI" id="CHEBI:57945"/>
    </reaction>
</comment>
<comment type="pathway">
    <text evidence="6">Xenobiotic degradation; gamma-hexachlorocyclohexane degradation.</text>
</comment>
<comment type="similarity">
    <text evidence="5">Belongs to the short-chain dehydrogenases/reductases (SDR) family.</text>
</comment>
<keyword id="KW-0216">Detoxification</keyword>
<keyword id="KW-0520">NAD</keyword>
<keyword id="KW-0560">Oxidoreductase</keyword>
<keyword id="KW-0614">Plasmid</keyword>
<dbReference type="EC" id="1.1.1.-" evidence="2"/>
<dbReference type="EMBL" id="AY150582">
    <property type="protein sequence ID" value="AAN64242.1"/>
    <property type="molecule type" value="Genomic_DNA"/>
</dbReference>
<dbReference type="EMBL" id="CP013071">
    <property type="protein sequence ID" value="APL96511.1"/>
    <property type="molecule type" value="Genomic_DNA"/>
</dbReference>
<dbReference type="SMR" id="A0A1L5BUG8"/>
<dbReference type="KEGG" id="sinb:SIDU_17850"/>
<dbReference type="UniPathway" id="UPA00689"/>
<dbReference type="Proteomes" id="UP000004550">
    <property type="component" value="Plasmid pSRL1"/>
</dbReference>
<dbReference type="GO" id="GO:0018502">
    <property type="term" value="F:2,5-dichloro-2,5-cyclohexadiene-1,4-diol dehydrogenase activity"/>
    <property type="evidence" value="ECO:0007669"/>
    <property type="project" value="RHEA"/>
</dbReference>
<dbReference type="GO" id="GO:0009636">
    <property type="term" value="P:response to toxic substance"/>
    <property type="evidence" value="ECO:0007669"/>
    <property type="project" value="UniProtKB-KW"/>
</dbReference>
<dbReference type="CDD" id="cd05233">
    <property type="entry name" value="SDR_c"/>
    <property type="match status" value="1"/>
</dbReference>
<dbReference type="FunFam" id="3.40.50.720:FF:000084">
    <property type="entry name" value="Short-chain dehydrogenase reductase"/>
    <property type="match status" value="1"/>
</dbReference>
<dbReference type="Gene3D" id="3.40.50.720">
    <property type="entry name" value="NAD(P)-binding Rossmann-like Domain"/>
    <property type="match status" value="1"/>
</dbReference>
<dbReference type="InterPro" id="IPR036291">
    <property type="entry name" value="NAD(P)-bd_dom_sf"/>
</dbReference>
<dbReference type="InterPro" id="IPR020904">
    <property type="entry name" value="Sc_DH/Rdtase_CS"/>
</dbReference>
<dbReference type="InterPro" id="IPR002347">
    <property type="entry name" value="SDR_fam"/>
</dbReference>
<dbReference type="NCBIfam" id="NF005559">
    <property type="entry name" value="PRK07231.1"/>
    <property type="match status" value="1"/>
</dbReference>
<dbReference type="PANTHER" id="PTHR24321">
    <property type="entry name" value="DEHYDROGENASES, SHORT CHAIN"/>
    <property type="match status" value="1"/>
</dbReference>
<dbReference type="PANTHER" id="PTHR24321:SF8">
    <property type="entry name" value="ESTRADIOL 17-BETA-DEHYDROGENASE 8-RELATED"/>
    <property type="match status" value="1"/>
</dbReference>
<dbReference type="Pfam" id="PF13561">
    <property type="entry name" value="adh_short_C2"/>
    <property type="match status" value="1"/>
</dbReference>
<dbReference type="PRINTS" id="PR00081">
    <property type="entry name" value="GDHRDH"/>
</dbReference>
<dbReference type="PRINTS" id="PR00080">
    <property type="entry name" value="SDRFAMILY"/>
</dbReference>
<dbReference type="SUPFAM" id="SSF51735">
    <property type="entry name" value="NAD(P)-binding Rossmann-fold domains"/>
    <property type="match status" value="1"/>
</dbReference>
<dbReference type="PROSITE" id="PS00061">
    <property type="entry name" value="ADH_SHORT"/>
    <property type="match status" value="1"/>
</dbReference>
<accession>A0A1L5BUG8</accession>
<accession>P50197</accession>
<gene>
    <name evidence="4" type="primary">linB</name>
    <name evidence="7" type="ORF">SIDU_17850</name>
</gene>